<reference key="1">
    <citation type="journal article" date="2009" name="ISME J.">
        <title>The genome sequence of the psychrophilic archaeon, Methanococcoides burtonii: the role of genome evolution in cold adaptation.</title>
        <authorList>
            <person name="Allen M.A."/>
            <person name="Lauro F.M."/>
            <person name="Williams T.J."/>
            <person name="Burg D."/>
            <person name="Siddiqui K.S."/>
            <person name="De Francisci D."/>
            <person name="Chong K.W."/>
            <person name="Pilak O."/>
            <person name="Chew H.H."/>
            <person name="De Maere M.Z."/>
            <person name="Ting L."/>
            <person name="Katrib M."/>
            <person name="Ng C."/>
            <person name="Sowers K.R."/>
            <person name="Galperin M.Y."/>
            <person name="Anderson I.J."/>
            <person name="Ivanova N."/>
            <person name="Dalin E."/>
            <person name="Martinez M."/>
            <person name="Lapidus A."/>
            <person name="Hauser L."/>
            <person name="Land M."/>
            <person name="Thomas T."/>
            <person name="Cavicchioli R."/>
        </authorList>
    </citation>
    <scope>NUCLEOTIDE SEQUENCE [LARGE SCALE GENOMIC DNA]</scope>
    <source>
        <strain>DSM 6242 / NBRC 107633 / OCM 468 / ACE-M</strain>
    </source>
</reference>
<protein>
    <recommendedName>
        <fullName evidence="1">S-adenosylmethionine synthase</fullName>
        <shortName evidence="1">AdoMet synthase</shortName>
        <ecNumber evidence="1">2.5.1.6</ecNumber>
    </recommendedName>
    <alternativeName>
        <fullName evidence="1">Methionine adenosyltransferase</fullName>
    </alternativeName>
</protein>
<keyword id="KW-0067">ATP-binding</keyword>
<keyword id="KW-0460">Magnesium</keyword>
<keyword id="KW-0547">Nucleotide-binding</keyword>
<keyword id="KW-0554">One-carbon metabolism</keyword>
<keyword id="KW-0808">Transferase</keyword>
<comment type="function">
    <text evidence="1">Catalyzes the formation of S-adenosylmethionine from methionine and ATP.</text>
</comment>
<comment type="catalytic activity">
    <reaction evidence="1">
        <text>L-methionine + ATP + H2O = S-adenosyl-L-methionine + phosphate + diphosphate</text>
        <dbReference type="Rhea" id="RHEA:21080"/>
        <dbReference type="ChEBI" id="CHEBI:15377"/>
        <dbReference type="ChEBI" id="CHEBI:30616"/>
        <dbReference type="ChEBI" id="CHEBI:33019"/>
        <dbReference type="ChEBI" id="CHEBI:43474"/>
        <dbReference type="ChEBI" id="CHEBI:57844"/>
        <dbReference type="ChEBI" id="CHEBI:59789"/>
        <dbReference type="EC" id="2.5.1.6"/>
    </reaction>
</comment>
<comment type="cofactor">
    <cofactor evidence="1">
        <name>Mg(2+)</name>
        <dbReference type="ChEBI" id="CHEBI:18420"/>
    </cofactor>
</comment>
<comment type="pathway">
    <text evidence="1">Amino-acid biosynthesis; S-adenosyl-L-methionine biosynthesis; S-adenosyl-L-methionine from L-methionine: step 1/1.</text>
</comment>
<comment type="similarity">
    <text evidence="1">Belongs to the AdoMet synthase 2 family.</text>
</comment>
<sequence length="401" mass="43984">MIRNIKVEHLHETPIEKQETELVERKGVGHPDSISDGLAEAVSRALCKEYIDKCGAILHHNTDETQIVAGRSRPEFGGGEVLKPIYTLLVGRATMEFDGMEIPAETVALQAAREYVRNTIPAMDLERDMIIDCKLGTGSSDLRDVFTRDHVPMANDTSFGVGHAPFSELEQVVYNTERQLLTDLKKKKIPGIGEDIKVMGLRENNDISLTICCGMVGRHIDDMDHYINAKEEMTEYVLDLATKYTDRTVSARINAADKVDGGCDCVFLTVTGTSAEMGDDGSVGRGNRSNGLITPSRPMSMEATSGKNPINHIGKIYNLLSTQMARDVVSAVDEVSDVHIKLLSQIGMPIDQPLVASAQVIPEDGANFAHIQSEAVVVIDDWLENITKITDMVVKGELDTF</sequence>
<accession>Q12WC8</accession>
<evidence type="ECO:0000255" key="1">
    <source>
        <dbReference type="HAMAP-Rule" id="MF_00136"/>
    </source>
</evidence>
<evidence type="ECO:0000256" key="2">
    <source>
        <dbReference type="SAM" id="MobiDB-lite"/>
    </source>
</evidence>
<feature type="chain" id="PRO_0000259464" description="S-adenosylmethionine synthase">
    <location>
        <begin position="1"/>
        <end position="401"/>
    </location>
</feature>
<feature type="region of interest" description="Disordered" evidence="2">
    <location>
        <begin position="278"/>
        <end position="305"/>
    </location>
</feature>
<feature type="binding site" evidence="1">
    <location>
        <begin position="136"/>
        <end position="141"/>
    </location>
    <ligand>
        <name>ATP</name>
        <dbReference type="ChEBI" id="CHEBI:30616"/>
    </ligand>
</feature>
<dbReference type="EC" id="2.5.1.6" evidence="1"/>
<dbReference type="EMBL" id="CP000300">
    <property type="protein sequence ID" value="ABE52248.1"/>
    <property type="molecule type" value="Genomic_DNA"/>
</dbReference>
<dbReference type="RefSeq" id="WP_011499393.1">
    <property type="nucleotide sequence ID" value="NC_007955.1"/>
</dbReference>
<dbReference type="SMR" id="Q12WC8"/>
<dbReference type="STRING" id="259564.Mbur_1330"/>
<dbReference type="GeneID" id="3997546"/>
<dbReference type="KEGG" id="mbu:Mbur_1330"/>
<dbReference type="HOGENOM" id="CLU_057642_0_0_2"/>
<dbReference type="OrthoDB" id="204488at2157"/>
<dbReference type="UniPathway" id="UPA00315">
    <property type="reaction ID" value="UER00080"/>
</dbReference>
<dbReference type="Proteomes" id="UP000001979">
    <property type="component" value="Chromosome"/>
</dbReference>
<dbReference type="GO" id="GO:0005524">
    <property type="term" value="F:ATP binding"/>
    <property type="evidence" value="ECO:0007669"/>
    <property type="project" value="UniProtKB-UniRule"/>
</dbReference>
<dbReference type="GO" id="GO:0000287">
    <property type="term" value="F:magnesium ion binding"/>
    <property type="evidence" value="ECO:0007669"/>
    <property type="project" value="UniProtKB-UniRule"/>
</dbReference>
<dbReference type="GO" id="GO:0004478">
    <property type="term" value="F:methionine adenosyltransferase activity"/>
    <property type="evidence" value="ECO:0007669"/>
    <property type="project" value="UniProtKB-UniRule"/>
</dbReference>
<dbReference type="GO" id="GO:0006730">
    <property type="term" value="P:one-carbon metabolic process"/>
    <property type="evidence" value="ECO:0007669"/>
    <property type="project" value="UniProtKB-KW"/>
</dbReference>
<dbReference type="GO" id="GO:0006556">
    <property type="term" value="P:S-adenosylmethionine biosynthetic process"/>
    <property type="evidence" value="ECO:0007669"/>
    <property type="project" value="UniProtKB-UniRule"/>
</dbReference>
<dbReference type="Gene3D" id="3.30.300.10">
    <property type="match status" value="1"/>
</dbReference>
<dbReference type="Gene3D" id="3.30.300.280">
    <property type="entry name" value="S-adenosylmethionine synthetase, C-terminal domain"/>
    <property type="match status" value="2"/>
</dbReference>
<dbReference type="HAMAP" id="MF_00136">
    <property type="entry name" value="S_AdoMet_synth2"/>
    <property type="match status" value="1"/>
</dbReference>
<dbReference type="InterPro" id="IPR027790">
    <property type="entry name" value="AdoMet_synthase_2_family"/>
</dbReference>
<dbReference type="InterPro" id="IPR042544">
    <property type="entry name" value="AdoMet_synthase_3"/>
</dbReference>
<dbReference type="InterPro" id="IPR002795">
    <property type="entry name" value="S-AdoMet_synthetase_arc"/>
</dbReference>
<dbReference type="NCBIfam" id="NF003364">
    <property type="entry name" value="PRK04439.1-3"/>
    <property type="match status" value="1"/>
</dbReference>
<dbReference type="NCBIfam" id="NF003366">
    <property type="entry name" value="PRK04439.1-5"/>
    <property type="match status" value="1"/>
</dbReference>
<dbReference type="PANTHER" id="PTHR36697">
    <property type="entry name" value="S-ADENOSYLMETHIONINE SYNTHASE"/>
    <property type="match status" value="1"/>
</dbReference>
<dbReference type="PANTHER" id="PTHR36697:SF1">
    <property type="entry name" value="S-ADENOSYLMETHIONINE SYNTHASE"/>
    <property type="match status" value="1"/>
</dbReference>
<dbReference type="Pfam" id="PF01941">
    <property type="entry name" value="AdoMet_Synthase"/>
    <property type="match status" value="1"/>
</dbReference>
<organism>
    <name type="scientific">Methanococcoides burtonii (strain DSM 6242 / NBRC 107633 / OCM 468 / ACE-M)</name>
    <dbReference type="NCBI Taxonomy" id="259564"/>
    <lineage>
        <taxon>Archaea</taxon>
        <taxon>Methanobacteriati</taxon>
        <taxon>Methanobacteriota</taxon>
        <taxon>Stenosarchaea group</taxon>
        <taxon>Methanomicrobia</taxon>
        <taxon>Methanosarcinales</taxon>
        <taxon>Methanosarcinaceae</taxon>
        <taxon>Methanococcoides</taxon>
    </lineage>
</organism>
<name>METK_METBU</name>
<gene>
    <name evidence="1" type="primary">mat</name>
    <name type="ordered locus">Mbur_1330</name>
</gene>
<proteinExistence type="inferred from homology"/>